<comment type="PTM">
    <text evidence="1">The N-terminus is cleaved by ribosomal processing cysteine protease Prp.</text>
</comment>
<comment type="similarity">
    <text evidence="2">Belongs to the bacterial ribosomal protein bL27 family.</text>
</comment>
<comment type="sequence caution" evidence="4">
    <conflict type="erroneous initiation">
        <sequence resource="EMBL-CDS" id="AAM79161"/>
    </conflict>
    <text>Extended N-terminus.</text>
</comment>
<proteinExistence type="inferred from homology"/>
<organism>
    <name type="scientific">Streptococcus pyogenes serotype M3 (strain ATCC BAA-595 / MGAS315)</name>
    <dbReference type="NCBI Taxonomy" id="198466"/>
    <lineage>
        <taxon>Bacteria</taxon>
        <taxon>Bacillati</taxon>
        <taxon>Bacillota</taxon>
        <taxon>Bacilli</taxon>
        <taxon>Lactobacillales</taxon>
        <taxon>Streptococcaceae</taxon>
        <taxon>Streptococcus</taxon>
    </lineage>
</organism>
<sequence length="94" mass="10031">MNLANLQLFAHKKGGGSTSNGRDSQAKRLGAKAADGQTVSGGSILYRQRGTHIYPGVNVGRGGDDTLFAKVEGVVRFERKGRDKKQVSVYPVAK</sequence>
<reference key="1">
    <citation type="journal article" date="2002" name="Proc. Natl. Acad. Sci. U.S.A.">
        <title>Genome sequence of a serotype M3 strain of group A Streptococcus: phage-encoded toxins, the high-virulence phenotype, and clone emergence.</title>
        <authorList>
            <person name="Beres S.B."/>
            <person name="Sylva G.L."/>
            <person name="Barbian K.D."/>
            <person name="Lei B."/>
            <person name="Hoff J.S."/>
            <person name="Mammarella N.D."/>
            <person name="Liu M.-Y."/>
            <person name="Smoot J.C."/>
            <person name="Porcella S.F."/>
            <person name="Parkins L.D."/>
            <person name="Campbell D.S."/>
            <person name="Smith T.M."/>
            <person name="McCormick J.K."/>
            <person name="Leung D.Y.M."/>
            <person name="Schlievert P.M."/>
            <person name="Musser J.M."/>
        </authorList>
    </citation>
    <scope>NUCLEOTIDE SEQUENCE [LARGE SCALE GENOMIC DNA]</scope>
    <source>
        <strain>ATCC BAA-595 / MGAS315</strain>
    </source>
</reference>
<evidence type="ECO:0000250" key="1">
    <source>
        <dbReference type="UniProtKB" id="Q2FXT0"/>
    </source>
</evidence>
<evidence type="ECO:0000255" key="2">
    <source>
        <dbReference type="HAMAP-Rule" id="MF_00539"/>
    </source>
</evidence>
<evidence type="ECO:0000256" key="3">
    <source>
        <dbReference type="SAM" id="MobiDB-lite"/>
    </source>
</evidence>
<evidence type="ECO:0000305" key="4"/>
<dbReference type="EMBL" id="AE014074">
    <property type="protein sequence ID" value="AAM79161.1"/>
    <property type="status" value="ALT_INIT"/>
    <property type="molecule type" value="Genomic_DNA"/>
</dbReference>
<dbReference type="SMR" id="P0DE28"/>
<dbReference type="KEGG" id="spg:SpyM3_0554"/>
<dbReference type="HOGENOM" id="CLU_095424_4_0_9"/>
<dbReference type="Proteomes" id="UP000000564">
    <property type="component" value="Chromosome"/>
</dbReference>
<dbReference type="GO" id="GO:0022625">
    <property type="term" value="C:cytosolic large ribosomal subunit"/>
    <property type="evidence" value="ECO:0007669"/>
    <property type="project" value="TreeGrafter"/>
</dbReference>
<dbReference type="GO" id="GO:0003735">
    <property type="term" value="F:structural constituent of ribosome"/>
    <property type="evidence" value="ECO:0007669"/>
    <property type="project" value="InterPro"/>
</dbReference>
<dbReference type="GO" id="GO:0006412">
    <property type="term" value="P:translation"/>
    <property type="evidence" value="ECO:0007669"/>
    <property type="project" value="UniProtKB-UniRule"/>
</dbReference>
<dbReference type="FunFam" id="2.40.50.100:FF:000004">
    <property type="entry name" value="50S ribosomal protein L27"/>
    <property type="match status" value="1"/>
</dbReference>
<dbReference type="Gene3D" id="2.40.50.100">
    <property type="match status" value="1"/>
</dbReference>
<dbReference type="HAMAP" id="MF_00539">
    <property type="entry name" value="Ribosomal_bL27"/>
    <property type="match status" value="1"/>
</dbReference>
<dbReference type="InterPro" id="IPR001684">
    <property type="entry name" value="Ribosomal_bL27"/>
</dbReference>
<dbReference type="InterPro" id="IPR018261">
    <property type="entry name" value="Ribosomal_bL27_CS"/>
</dbReference>
<dbReference type="NCBIfam" id="TIGR00062">
    <property type="entry name" value="L27"/>
    <property type="match status" value="1"/>
</dbReference>
<dbReference type="PANTHER" id="PTHR15893:SF0">
    <property type="entry name" value="LARGE RIBOSOMAL SUBUNIT PROTEIN BL27M"/>
    <property type="match status" value="1"/>
</dbReference>
<dbReference type="PANTHER" id="PTHR15893">
    <property type="entry name" value="RIBOSOMAL PROTEIN L27"/>
    <property type="match status" value="1"/>
</dbReference>
<dbReference type="Pfam" id="PF01016">
    <property type="entry name" value="Ribosomal_L27"/>
    <property type="match status" value="1"/>
</dbReference>
<dbReference type="PRINTS" id="PR00063">
    <property type="entry name" value="RIBOSOMALL27"/>
</dbReference>
<dbReference type="SUPFAM" id="SSF110324">
    <property type="entry name" value="Ribosomal L27 protein-like"/>
    <property type="match status" value="1"/>
</dbReference>
<dbReference type="PROSITE" id="PS00831">
    <property type="entry name" value="RIBOSOMAL_L27"/>
    <property type="match status" value="1"/>
</dbReference>
<feature type="propeptide" id="PRO_0000459964" evidence="1">
    <location>
        <begin position="1"/>
        <end position="9"/>
    </location>
</feature>
<feature type="chain" id="PRO_0000181181" description="Large ribosomal subunit protein bL27">
    <location>
        <begin position="10"/>
        <end position="94"/>
    </location>
</feature>
<feature type="region of interest" description="Disordered" evidence="3">
    <location>
        <begin position="11"/>
        <end position="34"/>
    </location>
</feature>
<keyword id="KW-0687">Ribonucleoprotein</keyword>
<keyword id="KW-0689">Ribosomal protein</keyword>
<name>RL27_STRP3</name>
<accession>P0DE28</accession>
<accession>P66138</accession>
<accession>Q9A0D4</accession>
<protein>
    <recommendedName>
        <fullName evidence="2">Large ribosomal subunit protein bL27</fullName>
    </recommendedName>
    <alternativeName>
        <fullName evidence="4">50S ribosomal protein L27</fullName>
    </alternativeName>
</protein>
<gene>
    <name evidence="2" type="primary">rpmA</name>
    <name evidence="2" type="synonym">rpl27</name>
    <name type="ordered locus">SpyM3_0554</name>
</gene>